<keyword id="KW-0002">3D-structure</keyword>
<keyword id="KW-0106">Calcium</keyword>
<keyword id="KW-1003">Cell membrane</keyword>
<keyword id="KW-0256">Endoplasmic reticulum</keyword>
<keyword id="KW-0407">Ion channel</keyword>
<keyword id="KW-0406">Ion transport</keyword>
<keyword id="KW-0472">Membrane</keyword>
<keyword id="KW-0597">Phosphoprotein</keyword>
<keyword id="KW-1185">Reference proteome</keyword>
<keyword id="KW-0812">Transmembrane</keyword>
<keyword id="KW-1133">Transmembrane helix</keyword>
<keyword id="KW-0813">Transport</keyword>
<proteinExistence type="evidence at protein level"/>
<protein>
    <recommendedName>
        <fullName evidence="9">Osmosensitive cation channel TMEM63C</fullName>
    </recommendedName>
    <alternativeName>
        <fullName>Calcium permeable stress-gated cation channel 1</fullName>
    </alternativeName>
    <alternativeName>
        <fullName>Transmembrane protein 63C</fullName>
    </alternativeName>
</protein>
<feature type="chain" id="PRO_0000280731" description="Osmosensitive cation channel TMEM63C">
    <location>
        <begin position="1"/>
        <end position="802"/>
    </location>
</feature>
<feature type="topological domain" description="Extracellular" evidence="11">
    <location>
        <begin position="1"/>
        <end position="35"/>
    </location>
</feature>
<feature type="transmembrane region" description="Helical; Name=TM0" evidence="11 13">
    <location>
        <begin position="36"/>
        <end position="60"/>
    </location>
</feature>
<feature type="topological domain" description="Cytoplasmic" evidence="11">
    <location>
        <begin position="61"/>
        <end position="124"/>
    </location>
</feature>
<feature type="transmembrane region" description="Helical; Name=TM1" evidence="11 13">
    <location>
        <begin position="125"/>
        <end position="157"/>
    </location>
</feature>
<feature type="topological domain" description="Extracellular" evidence="11">
    <location>
        <begin position="158"/>
        <end position="180"/>
    </location>
</feature>
<feature type="transmembrane region" description="Helical; Name=TM2" evidence="11 13">
    <location>
        <begin position="181"/>
        <end position="205"/>
    </location>
</feature>
<feature type="topological domain" description="Cytoplasmic" evidence="11">
    <location>
        <begin position="206"/>
        <end position="401"/>
    </location>
</feature>
<feature type="transmembrane region" description="Helical; Name=TM3" evidence="11 13">
    <location>
        <begin position="402"/>
        <end position="431"/>
    </location>
</feature>
<feature type="topological domain" description="Extracellular" evidence="11">
    <location>
        <begin position="432"/>
        <end position="446"/>
    </location>
</feature>
<feature type="transmembrane region" description="Helical; Name=TM4" evidence="11 13">
    <location>
        <begin position="447"/>
        <end position="476"/>
    </location>
</feature>
<feature type="topological domain" description="Cytoplasmic" evidence="11">
    <location>
        <begin position="477"/>
        <end position="480"/>
    </location>
</feature>
<feature type="transmembrane region" description="Helical; Name=TM5" evidence="11 13">
    <location>
        <begin position="481"/>
        <end position="517"/>
    </location>
</feature>
<feature type="topological domain" description="Extracellular" evidence="11">
    <location>
        <begin position="518"/>
        <end position="540"/>
    </location>
</feature>
<feature type="transmembrane region" description="Helical; Name=TM6" evidence="11 13">
    <location>
        <begin position="541"/>
        <end position="573"/>
    </location>
</feature>
<feature type="topological domain" description="Cytoplasmic" evidence="11">
    <location>
        <begin position="574"/>
        <end position="593"/>
    </location>
</feature>
<feature type="transmembrane region" description="Helical; Name=TM7" evidence="11 13">
    <location>
        <begin position="594"/>
        <end position="612"/>
    </location>
</feature>
<feature type="topological domain" description="Extracellular" evidence="11">
    <location>
        <begin position="613"/>
        <end position="615"/>
    </location>
</feature>
<feature type="transmembrane region" description="Helical; Name=TM8" evidence="11 13">
    <location>
        <begin position="616"/>
        <end position="640"/>
    </location>
</feature>
<feature type="topological domain" description="Cytoplasmic" evidence="11">
    <location>
        <begin position="641"/>
        <end position="647"/>
    </location>
</feature>
<feature type="transmembrane region" description="Helical; Name=TM9" evidence="11 13">
    <location>
        <begin position="648"/>
        <end position="676"/>
    </location>
</feature>
<feature type="topological domain" description="Extracellular" evidence="9">
    <location>
        <begin position="677"/>
        <end position="681"/>
    </location>
</feature>
<feature type="transmembrane region" description="Helical; Name=TM10" evidence="11 13">
    <location>
        <begin position="682"/>
        <end position="702"/>
    </location>
</feature>
<feature type="topological domain" description="Cytoplasmic" evidence="9">
    <location>
        <begin position="703"/>
        <end position="802"/>
    </location>
</feature>
<feature type="region of interest" description="Disordered" evidence="4">
    <location>
        <begin position="753"/>
        <end position="785"/>
    </location>
</feature>
<feature type="modified residue" description="Phosphoserine" evidence="14">
    <location>
        <position position="75"/>
    </location>
</feature>
<feature type="modified residue" description="Phosphoserine" evidence="14">
    <location>
        <position position="78"/>
    </location>
</feature>
<feature type="mutagenesis site" description="Increases calcium influx induced by hypo-osmotic stress." evidence="7">
    <original>V</original>
    <variation>C</variation>
    <variation>K</variation>
    <location>
        <position position="39"/>
    </location>
</feature>
<feature type="mutagenesis site" description="Increases calcium influx induced by hypo-osmotic stress." evidence="7">
    <original>Q</original>
    <variation>K</variation>
    <location>
        <position position="451"/>
    </location>
</feature>
<feature type="mutagenesis site" description="Does not significantly affect calcium influx induced by hypo-osmotic stress." evidence="7">
    <original>S</original>
    <variation>K</variation>
    <location>
        <position position="455"/>
    </location>
</feature>
<feature type="mutagenesis site" description="Increases calcium influx induced by hypo-osmotic stress." evidence="7">
    <original>F</original>
    <variation>A</variation>
    <location>
        <position position="542"/>
    </location>
</feature>
<feature type="mutagenesis site" description="Increases calcium influx induced by hypo-osmotic stress." evidence="7">
    <original>F</original>
    <variation>A</variation>
    <location>
        <position position="543"/>
    </location>
</feature>
<feature type="mutagenesis site" description="Increases calcium influx induced by hypo-osmotic stress." evidence="7">
    <original>N</original>
    <variation>C</variation>
    <variation>K</variation>
    <location>
        <position position="545"/>
    </location>
</feature>
<feature type="mutagenesis site" description="Increases calcium influx induced by hypo-osmotic stress." evidence="7">
    <original>Y</original>
    <variation>A</variation>
    <location>
        <position position="546"/>
    </location>
</feature>
<name>TM63C_MOUSE</name>
<reference key="1">
    <citation type="journal article" date="2005" name="Science">
        <title>The transcriptional landscape of the mammalian genome.</title>
        <authorList>
            <person name="Carninci P."/>
            <person name="Kasukawa T."/>
            <person name="Katayama S."/>
            <person name="Gough J."/>
            <person name="Frith M.C."/>
            <person name="Maeda N."/>
            <person name="Oyama R."/>
            <person name="Ravasi T."/>
            <person name="Lenhard B."/>
            <person name="Wells C."/>
            <person name="Kodzius R."/>
            <person name="Shimokawa K."/>
            <person name="Bajic V.B."/>
            <person name="Brenner S.E."/>
            <person name="Batalov S."/>
            <person name="Forrest A.R."/>
            <person name="Zavolan M."/>
            <person name="Davis M.J."/>
            <person name="Wilming L.G."/>
            <person name="Aidinis V."/>
            <person name="Allen J.E."/>
            <person name="Ambesi-Impiombato A."/>
            <person name="Apweiler R."/>
            <person name="Aturaliya R.N."/>
            <person name="Bailey T.L."/>
            <person name="Bansal M."/>
            <person name="Baxter L."/>
            <person name="Beisel K.W."/>
            <person name="Bersano T."/>
            <person name="Bono H."/>
            <person name="Chalk A.M."/>
            <person name="Chiu K.P."/>
            <person name="Choudhary V."/>
            <person name="Christoffels A."/>
            <person name="Clutterbuck D.R."/>
            <person name="Crowe M.L."/>
            <person name="Dalla E."/>
            <person name="Dalrymple B.P."/>
            <person name="de Bono B."/>
            <person name="Della Gatta G."/>
            <person name="di Bernardo D."/>
            <person name="Down T."/>
            <person name="Engstrom P."/>
            <person name="Fagiolini M."/>
            <person name="Faulkner G."/>
            <person name="Fletcher C.F."/>
            <person name="Fukushima T."/>
            <person name="Furuno M."/>
            <person name="Futaki S."/>
            <person name="Gariboldi M."/>
            <person name="Georgii-Hemming P."/>
            <person name="Gingeras T.R."/>
            <person name="Gojobori T."/>
            <person name="Green R.E."/>
            <person name="Gustincich S."/>
            <person name="Harbers M."/>
            <person name="Hayashi Y."/>
            <person name="Hensch T.K."/>
            <person name="Hirokawa N."/>
            <person name="Hill D."/>
            <person name="Huminiecki L."/>
            <person name="Iacono M."/>
            <person name="Ikeo K."/>
            <person name="Iwama A."/>
            <person name="Ishikawa T."/>
            <person name="Jakt M."/>
            <person name="Kanapin A."/>
            <person name="Katoh M."/>
            <person name="Kawasawa Y."/>
            <person name="Kelso J."/>
            <person name="Kitamura H."/>
            <person name="Kitano H."/>
            <person name="Kollias G."/>
            <person name="Krishnan S.P."/>
            <person name="Kruger A."/>
            <person name="Kummerfeld S.K."/>
            <person name="Kurochkin I.V."/>
            <person name="Lareau L.F."/>
            <person name="Lazarevic D."/>
            <person name="Lipovich L."/>
            <person name="Liu J."/>
            <person name="Liuni S."/>
            <person name="McWilliam S."/>
            <person name="Madan Babu M."/>
            <person name="Madera M."/>
            <person name="Marchionni L."/>
            <person name="Matsuda H."/>
            <person name="Matsuzawa S."/>
            <person name="Miki H."/>
            <person name="Mignone F."/>
            <person name="Miyake S."/>
            <person name="Morris K."/>
            <person name="Mottagui-Tabar S."/>
            <person name="Mulder N."/>
            <person name="Nakano N."/>
            <person name="Nakauchi H."/>
            <person name="Ng P."/>
            <person name="Nilsson R."/>
            <person name="Nishiguchi S."/>
            <person name="Nishikawa S."/>
            <person name="Nori F."/>
            <person name="Ohara O."/>
            <person name="Okazaki Y."/>
            <person name="Orlando V."/>
            <person name="Pang K.C."/>
            <person name="Pavan W.J."/>
            <person name="Pavesi G."/>
            <person name="Pesole G."/>
            <person name="Petrovsky N."/>
            <person name="Piazza S."/>
            <person name="Reed J."/>
            <person name="Reid J.F."/>
            <person name="Ring B.Z."/>
            <person name="Ringwald M."/>
            <person name="Rost B."/>
            <person name="Ruan Y."/>
            <person name="Salzberg S.L."/>
            <person name="Sandelin A."/>
            <person name="Schneider C."/>
            <person name="Schoenbach C."/>
            <person name="Sekiguchi K."/>
            <person name="Semple C.A."/>
            <person name="Seno S."/>
            <person name="Sessa L."/>
            <person name="Sheng Y."/>
            <person name="Shibata Y."/>
            <person name="Shimada H."/>
            <person name="Shimada K."/>
            <person name="Silva D."/>
            <person name="Sinclair B."/>
            <person name="Sperling S."/>
            <person name="Stupka E."/>
            <person name="Sugiura K."/>
            <person name="Sultana R."/>
            <person name="Takenaka Y."/>
            <person name="Taki K."/>
            <person name="Tammoja K."/>
            <person name="Tan S.L."/>
            <person name="Tang S."/>
            <person name="Taylor M.S."/>
            <person name="Tegner J."/>
            <person name="Teichmann S.A."/>
            <person name="Ueda H.R."/>
            <person name="van Nimwegen E."/>
            <person name="Verardo R."/>
            <person name="Wei C.L."/>
            <person name="Yagi K."/>
            <person name="Yamanishi H."/>
            <person name="Zabarovsky E."/>
            <person name="Zhu S."/>
            <person name="Zimmer A."/>
            <person name="Hide W."/>
            <person name="Bult C."/>
            <person name="Grimmond S.M."/>
            <person name="Teasdale R.D."/>
            <person name="Liu E.T."/>
            <person name="Brusic V."/>
            <person name="Quackenbush J."/>
            <person name="Wahlestedt C."/>
            <person name="Mattick J.S."/>
            <person name="Hume D.A."/>
            <person name="Kai C."/>
            <person name="Sasaki D."/>
            <person name="Tomaru Y."/>
            <person name="Fukuda S."/>
            <person name="Kanamori-Katayama M."/>
            <person name="Suzuki M."/>
            <person name="Aoki J."/>
            <person name="Arakawa T."/>
            <person name="Iida J."/>
            <person name="Imamura K."/>
            <person name="Itoh M."/>
            <person name="Kato T."/>
            <person name="Kawaji H."/>
            <person name="Kawagashira N."/>
            <person name="Kawashima T."/>
            <person name="Kojima M."/>
            <person name="Kondo S."/>
            <person name="Konno H."/>
            <person name="Nakano K."/>
            <person name="Ninomiya N."/>
            <person name="Nishio T."/>
            <person name="Okada M."/>
            <person name="Plessy C."/>
            <person name="Shibata K."/>
            <person name="Shiraki T."/>
            <person name="Suzuki S."/>
            <person name="Tagami M."/>
            <person name="Waki K."/>
            <person name="Watahiki A."/>
            <person name="Okamura-Oho Y."/>
            <person name="Suzuki H."/>
            <person name="Kawai J."/>
            <person name="Hayashizaki Y."/>
        </authorList>
    </citation>
    <scope>NUCLEOTIDE SEQUENCE [LARGE SCALE MRNA]</scope>
    <source>
        <strain>C57BL/6J</strain>
        <tissue>Diencephalon</tissue>
    </source>
</reference>
<reference key="2">
    <citation type="journal article" date="2004" name="Genome Res.">
        <title>The status, quality, and expansion of the NIH full-length cDNA project: the Mammalian Gene Collection (MGC).</title>
        <authorList>
            <consortium name="The MGC Project Team"/>
        </authorList>
    </citation>
    <scope>NUCLEOTIDE SEQUENCE [LARGE SCALE MRNA]</scope>
    <source>
        <strain>C57BL/6J</strain>
        <tissue>Brain</tissue>
    </source>
</reference>
<reference key="3">
    <citation type="journal article" date="2010" name="Cell">
        <title>A tissue-specific atlas of mouse protein phosphorylation and expression.</title>
        <authorList>
            <person name="Huttlin E.L."/>
            <person name="Jedrychowski M.P."/>
            <person name="Elias J.E."/>
            <person name="Goswami T."/>
            <person name="Rad R."/>
            <person name="Beausoleil S.A."/>
            <person name="Villen J."/>
            <person name="Haas W."/>
            <person name="Sowa M.E."/>
            <person name="Gygi S.P."/>
        </authorList>
    </citation>
    <scope>PHOSPHORYLATION [LARGE SCALE ANALYSIS] AT SER-75 AND SER-78</scope>
    <scope>IDENTIFICATION BY MASS SPECTROMETRY [LARGE SCALE ANALYSIS]</scope>
    <source>
        <tissue>Brain</tissue>
        <tissue>Testis</tissue>
    </source>
</reference>
<reference key="4">
    <citation type="journal article" date="2016" name="Cell Biochem. Funct.">
        <title>Co-expression of mouse TMEM63A, TMEM63B and TMEM63C confers hyperosmolarity activated ion currents in HEK293 cells.</title>
        <authorList>
            <person name="Zhao X."/>
            <person name="Yan X."/>
            <person name="Liu Y."/>
            <person name="Zhang P."/>
            <person name="Ni X."/>
        </authorList>
    </citation>
    <scope>FUNCTION</scope>
    <scope>SUBCELLULAR LOCATION</scope>
</reference>
<reference key="5">
    <citation type="journal article" date="2020" name="Cell Rep.">
        <title>The Cation Channel TMEM63B Is an Osmosensor Required for Hearing.</title>
        <authorList>
            <person name="Du H."/>
            <person name="Ye C."/>
            <person name="Wu D."/>
            <person name="Zang Y.Y."/>
            <person name="Zhang L."/>
            <person name="Chen C."/>
            <person name="He X.Y."/>
            <person name="Yang J.J."/>
            <person name="Hu P."/>
            <person name="Xu Z."/>
            <person name="Wan G."/>
            <person name="Shi Y.S."/>
        </authorList>
    </citation>
    <scope>FUNCTION</scope>
    <scope>TRANSPORTER ACTIVITY</scope>
</reference>
<reference key="6">
    <citation type="journal article" date="2023" name="Nat. Commun.">
        <title>Cryo-EM structure of TMEM63C suggests it functions as a monomer.</title>
        <authorList>
            <person name="Qin Y."/>
            <person name="Yu D."/>
            <person name="Wu D."/>
            <person name="Dong J."/>
            <person name="Li W.T."/>
            <person name="Ye C."/>
            <person name="Cheung K.C."/>
            <person name="Zhang Y."/>
            <person name="Xu Y."/>
            <person name="Wang Y."/>
            <person name="Shi Y.S."/>
            <person name="Dang S."/>
        </authorList>
    </citation>
    <scope>STRUCTURE BY ELECTRON MICROSCOPY (3.56 ANGSTROMS)</scope>
    <scope>TOPOLOGY</scope>
    <scope>FUNCTION</scope>
    <scope>TRANSPORTER ACTIVITY</scope>
    <scope>SUBUNIT</scope>
    <scope>SUBCELLULAR LOCATION</scope>
    <scope>MUTAGENESIS OF VAL-39; GLN-451; SER-455; PHE-542; PHE-543; ASN-545 AND TYR-546</scope>
</reference>
<accession>Q8CBX0</accession>
<gene>
    <name evidence="8 12" type="primary">Tmem63c</name>
    <name type="synonym">CSC1</name>
</gene>
<dbReference type="EMBL" id="AK034410">
    <property type="protein sequence ID" value="BAC28698.1"/>
    <property type="molecule type" value="mRNA"/>
</dbReference>
<dbReference type="EMBL" id="BC056936">
    <property type="protein sequence ID" value="AAH56936.1"/>
    <property type="molecule type" value="mRNA"/>
</dbReference>
<dbReference type="EMBL" id="BC057088">
    <property type="protein sequence ID" value="AAH57088.1"/>
    <property type="molecule type" value="mRNA"/>
</dbReference>
<dbReference type="CCDS" id="CCDS26069.1"/>
<dbReference type="RefSeq" id="NP_001348633.1">
    <property type="nucleotide sequence ID" value="NM_001361704.1"/>
</dbReference>
<dbReference type="RefSeq" id="NP_766171.1">
    <property type="nucleotide sequence ID" value="NM_172583.3"/>
</dbReference>
<dbReference type="RefSeq" id="XP_006515779.1">
    <property type="nucleotide sequence ID" value="XM_006515716.3"/>
</dbReference>
<dbReference type="RefSeq" id="XP_006515780.1">
    <property type="nucleotide sequence ID" value="XM_006515717.5"/>
</dbReference>
<dbReference type="RefSeq" id="XP_006515781.1">
    <property type="nucleotide sequence ID" value="XM_006515718.5"/>
</dbReference>
<dbReference type="RefSeq" id="XP_006515783.1">
    <property type="nucleotide sequence ID" value="XM_006515720.4"/>
</dbReference>
<dbReference type="RefSeq" id="XP_011242383.1">
    <property type="nucleotide sequence ID" value="XM_011244081.4"/>
</dbReference>
<dbReference type="RefSeq" id="XP_011242384.1">
    <property type="nucleotide sequence ID" value="XM_011244082.2"/>
</dbReference>
<dbReference type="RefSeq" id="XP_011242385.1">
    <property type="nucleotide sequence ID" value="XM_011244083.2"/>
</dbReference>
<dbReference type="RefSeq" id="XP_011242386.1">
    <property type="nucleotide sequence ID" value="XM_011244084.4"/>
</dbReference>
<dbReference type="RefSeq" id="XP_011242387.1">
    <property type="nucleotide sequence ID" value="XM_011244085.4"/>
</dbReference>
<dbReference type="RefSeq" id="XP_011242388.1">
    <property type="nucleotide sequence ID" value="XM_011244086.2"/>
</dbReference>
<dbReference type="RefSeq" id="XP_030102522.1">
    <property type="nucleotide sequence ID" value="XM_030246662.2"/>
</dbReference>
<dbReference type="PDB" id="8K0B">
    <property type="method" value="EM"/>
    <property type="resolution" value="3.56 A"/>
    <property type="chains" value="A=1-802"/>
</dbReference>
<dbReference type="PDBsum" id="8K0B"/>
<dbReference type="EMDB" id="EMD-36759"/>
<dbReference type="SMR" id="Q8CBX0"/>
<dbReference type="FunCoup" id="Q8CBX0">
    <property type="interactions" value="189"/>
</dbReference>
<dbReference type="STRING" id="10090.ENSMUSP00000119872"/>
<dbReference type="GlyGen" id="Q8CBX0">
    <property type="glycosylation" value="1 site, 1 N-linked glycan (1 site)"/>
</dbReference>
<dbReference type="iPTMnet" id="Q8CBX0"/>
<dbReference type="PhosphoSitePlus" id="Q8CBX0"/>
<dbReference type="SwissPalm" id="Q8CBX0"/>
<dbReference type="PaxDb" id="10090-ENSMUSP00000119872"/>
<dbReference type="ProteomicsDB" id="285340"/>
<dbReference type="Antibodypedia" id="25977">
    <property type="antibodies" value="24 antibodies from 13 providers"/>
</dbReference>
<dbReference type="DNASU" id="217733"/>
<dbReference type="Ensembl" id="ENSMUST00000110187.8">
    <property type="protein sequence ID" value="ENSMUSP00000105816.2"/>
    <property type="gene ID" value="ENSMUSG00000034145.15"/>
</dbReference>
<dbReference type="Ensembl" id="ENSMUST00000131878.2">
    <property type="protein sequence ID" value="ENSMUSP00000117023.2"/>
    <property type="gene ID" value="ENSMUSG00000034145.15"/>
</dbReference>
<dbReference type="Ensembl" id="ENSMUST00000146292.8">
    <property type="protein sequence ID" value="ENSMUSP00000119872.2"/>
    <property type="gene ID" value="ENSMUSG00000034145.15"/>
</dbReference>
<dbReference type="GeneID" id="217733"/>
<dbReference type="KEGG" id="mmu:217733"/>
<dbReference type="UCSC" id="uc007oig.1">
    <property type="organism name" value="mouse"/>
</dbReference>
<dbReference type="AGR" id="MGI:2444386"/>
<dbReference type="CTD" id="57156"/>
<dbReference type="MGI" id="MGI:2444386">
    <property type="gene designation" value="Tmem63c"/>
</dbReference>
<dbReference type="VEuPathDB" id="HostDB:ENSMUSG00000034145"/>
<dbReference type="eggNOG" id="KOG1134">
    <property type="taxonomic scope" value="Eukaryota"/>
</dbReference>
<dbReference type="GeneTree" id="ENSGT00940000159072"/>
<dbReference type="HOGENOM" id="CLU_015647_0_0_1"/>
<dbReference type="InParanoid" id="Q8CBX0"/>
<dbReference type="OMA" id="VVCAWAF"/>
<dbReference type="OrthoDB" id="1689567at2759"/>
<dbReference type="PhylomeDB" id="Q8CBX0"/>
<dbReference type="TreeFam" id="TF324300"/>
<dbReference type="BioGRID-ORCS" id="217733">
    <property type="hits" value="2 hits in 79 CRISPR screens"/>
</dbReference>
<dbReference type="ChiTaRS" id="Tmem63c">
    <property type="organism name" value="mouse"/>
</dbReference>
<dbReference type="PRO" id="PR:Q8CBX0"/>
<dbReference type="Proteomes" id="UP000000589">
    <property type="component" value="Chromosome 12"/>
</dbReference>
<dbReference type="RNAct" id="Q8CBX0">
    <property type="molecule type" value="protein"/>
</dbReference>
<dbReference type="Bgee" id="ENSMUSG00000034145">
    <property type="expression patterns" value="Expressed in dentate gyrus of hippocampal formation granule cell and 49 other cell types or tissues"/>
</dbReference>
<dbReference type="ExpressionAtlas" id="Q8CBX0">
    <property type="expression patterns" value="baseline and differential"/>
</dbReference>
<dbReference type="GO" id="GO:0005789">
    <property type="term" value="C:endoplasmic reticulum membrane"/>
    <property type="evidence" value="ECO:0007669"/>
    <property type="project" value="UniProtKB-SubCell"/>
</dbReference>
<dbReference type="GO" id="GO:0005765">
    <property type="term" value="C:lysosomal membrane"/>
    <property type="evidence" value="ECO:0007669"/>
    <property type="project" value="Ensembl"/>
</dbReference>
<dbReference type="GO" id="GO:0005886">
    <property type="term" value="C:plasma membrane"/>
    <property type="evidence" value="ECO:0000314"/>
    <property type="project" value="UniProtKB"/>
</dbReference>
<dbReference type="GO" id="GO:0005227">
    <property type="term" value="F:calcium-activated cation channel activity"/>
    <property type="evidence" value="ECO:0007669"/>
    <property type="project" value="Ensembl"/>
</dbReference>
<dbReference type="GO" id="GO:1990760">
    <property type="term" value="F:osmolarity-sensing monoatomic cation channel activity"/>
    <property type="evidence" value="ECO:0000314"/>
    <property type="project" value="UniProtKB"/>
</dbReference>
<dbReference type="GO" id="GO:0003094">
    <property type="term" value="P:glomerular filtration"/>
    <property type="evidence" value="ECO:0000250"/>
    <property type="project" value="UniProtKB"/>
</dbReference>
<dbReference type="InterPro" id="IPR045122">
    <property type="entry name" value="Csc1-like"/>
</dbReference>
<dbReference type="InterPro" id="IPR003864">
    <property type="entry name" value="CSC1/OSCA1-like_7TM"/>
</dbReference>
<dbReference type="InterPro" id="IPR027815">
    <property type="entry name" value="CSC1/OSCA1-like_cyt"/>
</dbReference>
<dbReference type="InterPro" id="IPR032880">
    <property type="entry name" value="Csc1/OSCA1-like_N"/>
</dbReference>
<dbReference type="PANTHER" id="PTHR13018:SF21">
    <property type="entry name" value="CALCIUM PERMEABLE STRESS-GATED CATION CHANNEL 1"/>
    <property type="match status" value="1"/>
</dbReference>
<dbReference type="PANTHER" id="PTHR13018">
    <property type="entry name" value="PROBABLE MEMBRANE PROTEIN DUF221-RELATED"/>
    <property type="match status" value="1"/>
</dbReference>
<dbReference type="Pfam" id="PF14703">
    <property type="entry name" value="PHM7_cyt"/>
    <property type="match status" value="1"/>
</dbReference>
<dbReference type="Pfam" id="PF02714">
    <property type="entry name" value="RSN1_7TM"/>
    <property type="match status" value="1"/>
</dbReference>
<dbReference type="Pfam" id="PF13967">
    <property type="entry name" value="RSN1_TM"/>
    <property type="match status" value="1"/>
</dbReference>
<organism>
    <name type="scientific">Mus musculus</name>
    <name type="common">Mouse</name>
    <dbReference type="NCBI Taxonomy" id="10090"/>
    <lineage>
        <taxon>Eukaryota</taxon>
        <taxon>Metazoa</taxon>
        <taxon>Chordata</taxon>
        <taxon>Craniata</taxon>
        <taxon>Vertebrata</taxon>
        <taxon>Euteleostomi</taxon>
        <taxon>Mammalia</taxon>
        <taxon>Eutheria</taxon>
        <taxon>Euarchontoglires</taxon>
        <taxon>Glires</taxon>
        <taxon>Rodentia</taxon>
        <taxon>Myomorpha</taxon>
        <taxon>Muroidea</taxon>
        <taxon>Muridae</taxon>
        <taxon>Murinae</taxon>
        <taxon>Mus</taxon>
        <taxon>Mus</taxon>
    </lineage>
</organism>
<comment type="function">
    <text evidence="1 2 5 6 7">Acts as an osmosensitive cation channel preferentially activated upon hypotonic stress (PubMed:27045885, PubMed:32375046, PubMed:37945568). In contrast to TMEM63B, does not show phospholipid scramblase activity (By similarity). Enriched in mitochondria-ER contact sites where it may regulate the metabolite flux and organelles' morphologies in response to osmotic changes (By similarity). In particular may regulate mitochondrial motility and function in motor neuron axons (By similarity). Required for the functional integrity of the kidney glomerular filtration barrier (By similarity).</text>
</comment>
<comment type="catalytic activity">
    <reaction evidence="10 11">
        <text>Ca(2+)(in) = Ca(2+)(out)</text>
        <dbReference type="Rhea" id="RHEA:29671"/>
        <dbReference type="ChEBI" id="CHEBI:29108"/>
    </reaction>
</comment>
<comment type="subunit">
    <text evidence="7">Monomer.</text>
</comment>
<comment type="subcellular location">
    <subcellularLocation>
        <location evidence="2">Endoplasmic reticulum membrane</location>
        <topology evidence="3">Multi-pass membrane protein</topology>
    </subcellularLocation>
    <subcellularLocation>
        <location evidence="5 7">Cell membrane</location>
        <topology evidence="3">Multi-pass membrane protein</topology>
    </subcellularLocation>
    <text evidence="2">Localizes at mitochondria-ER contact sites.</text>
</comment>
<comment type="similarity">
    <text evidence="9">Belongs to the CSC1 (TC 1.A.17) family.</text>
</comment>
<evidence type="ECO:0000250" key="1">
    <source>
        <dbReference type="UniProtKB" id="D3ZNF5"/>
    </source>
</evidence>
<evidence type="ECO:0000250" key="2">
    <source>
        <dbReference type="UniProtKB" id="Q9P1W3"/>
    </source>
</evidence>
<evidence type="ECO:0000255" key="3"/>
<evidence type="ECO:0000256" key="4">
    <source>
        <dbReference type="SAM" id="MobiDB-lite"/>
    </source>
</evidence>
<evidence type="ECO:0000269" key="5">
    <source>
    </source>
</evidence>
<evidence type="ECO:0000269" key="6">
    <source>
    </source>
</evidence>
<evidence type="ECO:0000269" key="7">
    <source>
    </source>
</evidence>
<evidence type="ECO:0000303" key="8">
    <source>
    </source>
</evidence>
<evidence type="ECO:0000305" key="9"/>
<evidence type="ECO:0000305" key="10">
    <source>
    </source>
</evidence>
<evidence type="ECO:0000305" key="11">
    <source>
    </source>
</evidence>
<evidence type="ECO:0000312" key="12">
    <source>
        <dbReference type="MGI" id="MGI:2444386"/>
    </source>
</evidence>
<evidence type="ECO:0007744" key="13">
    <source>
        <dbReference type="PDB" id="8K0B"/>
    </source>
</evidence>
<evidence type="ECO:0007744" key="14">
    <source>
    </source>
</evidence>
<sequence length="802" mass="93011">MSAFPDSMDQKFHNMTVNECFQSRSTVLQGQPFGGIPTVLVLNIILWVFVVLLYSFLRKAAWDYGRLALLIHNDSLTSLIYGEQSEKSSPSEVSLEAERRDRGFSSWFFNSLTMRDRDLINKCGDDARIYITFQYHLIIFVLILCIPSLGIILPVNYIGTVLDWNSHFGRTTIVNVSTESKFLWLHSLFAFLYFLINLAFMGHHCLGFVPKKSLHFTRTLMITYVPTEIQDPEIISKHFHEAYPGCVVTRVHFCYDVRNLIDLDDQRRHAMRGRLYYTAKAKKTGKVMIKTHPCSRLCFCKCWTCFKEVDAEQYYSELEEQLTDEFNAELNRVQLKRLDLIFVTFQDARTVRRIYDDYKYIHCGRHPKQSSVTTIVKNYHWRVAHAPHPKDIIWKHLSIRRFSWWTRFIAINTFLFFLFFFLTTPAIIINTIDIYNVTRPIEKLQSPIVTQFFPSVLLWAFTVTMPLLVYLSAFLEAHWTRSSQNLIIVHKCYIFLVFMVVILPSMGLTSLHVFLRWLFDIYYLEHATIRFQCVFLPDNGAFFINYVITAALLGTGMELMRLGSLCTYCTRLFLSKSEPERVHIRKNQATDFQFGREYAWMLNVFSVVMAYSITCPIIVPFGLLYLCMKHITDRYNMYYSYAPTKLNAQIHMAAVYQAIFAPLLGLFWMLFFSILRVGSLHSITLFSMSSLIISVVIAFSGVFLGKLRIAQRYEQPEEETETVFDVEPSSTTSTPTSLLYVATVLQEPELNLTPASSPARHTYGTINSQPEEGEEESGLRGFARELDSAQFQEGLEMEGQSH</sequence>